<protein>
    <recommendedName>
        <fullName evidence="4">Acyl-coenzyme A thioesterase 6</fullName>
        <shortName evidence="4">Acyl-CoA thioesterase 6</shortName>
        <ecNumber evidence="2">3.1.2.-</ecNumber>
    </recommendedName>
</protein>
<proteinExistence type="evidence at transcript level"/>
<comment type="function">
    <text evidence="2">Catalyzes the hydrolysis of acyl-CoAs into free fatty acids and coenzyme A (CoASH), regulating their respective intracellular levels. Catalyzes the hydrolysis of phytanoyl-CoA and pristanoyl-CoA, two methyl-branched fatty acids derived from phytol, that enter the body via the diet.</text>
</comment>
<comment type="catalytic activity">
    <reaction evidence="2">
        <text>pristanoyl-CoA + H2O = 2,6,10,14-tetramethylpentadecanoate + CoA + H(+)</text>
        <dbReference type="Rhea" id="RHEA:40415"/>
        <dbReference type="ChEBI" id="CHEBI:15377"/>
        <dbReference type="ChEBI" id="CHEBI:15378"/>
        <dbReference type="ChEBI" id="CHEBI:57287"/>
        <dbReference type="ChEBI" id="CHEBI:77250"/>
        <dbReference type="ChEBI" id="CHEBI:77268"/>
    </reaction>
    <physiologicalReaction direction="left-to-right" evidence="2">
        <dbReference type="Rhea" id="RHEA:40416"/>
    </physiologicalReaction>
</comment>
<comment type="catalytic activity">
    <reaction evidence="2">
        <text>phytanoyl-CoA + H2O = 3,7,11,15-tetramethylhexadecanoate + CoA + H(+)</text>
        <dbReference type="Rhea" id="RHEA:40419"/>
        <dbReference type="ChEBI" id="CHEBI:15377"/>
        <dbReference type="ChEBI" id="CHEBI:15378"/>
        <dbReference type="ChEBI" id="CHEBI:37257"/>
        <dbReference type="ChEBI" id="CHEBI:57287"/>
        <dbReference type="ChEBI" id="CHEBI:57391"/>
    </reaction>
    <physiologicalReaction direction="left-to-right" evidence="2">
        <dbReference type="Rhea" id="RHEA:40420"/>
    </physiologicalReaction>
</comment>
<comment type="pathway">
    <text evidence="2">Lipid metabolism; fatty acid metabolism.</text>
</comment>
<comment type="subcellular location">
    <molecule>Isoform 1</molecule>
    <subcellularLocation>
        <location evidence="4">Peroxisome</location>
    </subcellularLocation>
    <text evidence="4">Localization to the peroxisome is uncertain since the potential C-terminal peroxisome targeting signal found in the mouse ortholog is not perfectly conserved.</text>
</comment>
<comment type="subcellular location">
    <molecule>Isoform 2</molecule>
    <subcellularLocation>
        <location evidence="4">Cytoplasm</location>
    </subcellularLocation>
    <text evidence="4">Recombinant N-terminally GFP-tagged protein localizes to the cytosol.</text>
</comment>
<comment type="alternative products">
    <event type="alternative splicing"/>
    <isoform>
        <id>Q3I5F7-1</id>
        <name>1</name>
        <sequence type="displayed"/>
    </isoform>
    <isoform>
        <id>Q3I5F7-2</id>
        <name>2</name>
        <sequence type="described" ref="VSP_061185"/>
    </isoform>
</comment>
<comment type="similarity">
    <text evidence="3">Belongs to the C/M/P thioester hydrolase family.</text>
</comment>
<organism>
    <name type="scientific">Homo sapiens</name>
    <name type="common">Human</name>
    <dbReference type="NCBI Taxonomy" id="9606"/>
    <lineage>
        <taxon>Eukaryota</taxon>
        <taxon>Metazoa</taxon>
        <taxon>Chordata</taxon>
        <taxon>Craniata</taxon>
        <taxon>Vertebrata</taxon>
        <taxon>Euteleostomi</taxon>
        <taxon>Mammalia</taxon>
        <taxon>Eutheria</taxon>
        <taxon>Euarchontoglires</taxon>
        <taxon>Primates</taxon>
        <taxon>Haplorrhini</taxon>
        <taxon>Catarrhini</taxon>
        <taxon>Hominidae</taxon>
        <taxon>Homo</taxon>
    </lineage>
</organism>
<sequence length="421" mass="46789">MAATLILEPAGRCCWDEPLRIAVRGLAPEQPVTLRTSLRDEEGALFRAHARYRADARDELDLERAPALGGSFAGLQPMGLLWALEPEKALVRLVKRDVRTPFAVELEVLDGHDTEPGRLLCLAQNKRDFLRPGVRREPVRAGPVRAALFLPPDEGPFPGIIDLFGSSRGLCEYRASLLAGHGFAVLALAYFRFEDLPEDLNDVHLEYFEEAVDFMLQHPKVKGPSIALLGFSKGGDLCLSMASFLKGITATVLINACVANTVAPLHYKDMIIPKLVDDLGKVKITKSGFLTFMDTWSNPLEEHNHQSLVPLEKAQVPFLFIVGMDDQSWKSEFYAQIASERLQAHGKERPQIICYPETGHCIDPPYFPPSRASVHAVLGEAIFYGGEPKAHSKAQVDAWQQIQTFFHKHLNGKKSVKHSKI</sequence>
<accession>Q3I5F7</accession>
<accession>A0A2R8Y7H3</accession>
<keyword id="KW-0025">Alternative splicing</keyword>
<keyword id="KW-0963">Cytoplasm</keyword>
<keyword id="KW-0378">Hydrolase</keyword>
<keyword id="KW-0576">Peroxisome</keyword>
<keyword id="KW-1185">Reference proteome</keyword>
<keyword id="KW-0719">Serine esterase</keyword>
<evidence type="ECO:0000250" key="1">
    <source>
        <dbReference type="UniProtKB" id="O55137"/>
    </source>
</evidence>
<evidence type="ECO:0000250" key="2">
    <source>
        <dbReference type="UniProtKB" id="Q32Q92"/>
    </source>
</evidence>
<evidence type="ECO:0000305" key="3"/>
<evidence type="ECO:0000305" key="4">
    <source>
    </source>
</evidence>
<evidence type="ECO:0000312" key="5">
    <source>
        <dbReference type="HGNC" id="HGNC:33159"/>
    </source>
</evidence>
<gene>
    <name evidence="5" type="primary">ACOT6</name>
    <name evidence="5" type="synonym">C14orf42</name>
</gene>
<reference key="1">
    <citation type="journal article" date="2006" name="FASEB J.">
        <title>Analysis of the mouse and human acyl-CoA thioesterase (ACOT) gene clusters shows that convergent, functional evolution results in a reduced number of human peroxisomal ACOTs.</title>
        <authorList>
            <person name="Hunt M.C."/>
            <person name="Rautanen A."/>
            <person name="Westin M.A.K."/>
            <person name="Svensson L.T."/>
            <person name="Alexson S.E.H."/>
        </authorList>
    </citation>
    <scope>NUCLEOTIDE SEQUENCE [MRNA] (ISOFORM 2)</scope>
    <scope>SUBCELLULAR LOCATION</scope>
</reference>
<reference key="2">
    <citation type="journal article" date="2003" name="Nature">
        <title>The DNA sequence and analysis of human chromosome 14.</title>
        <authorList>
            <person name="Heilig R."/>
            <person name="Eckenberg R."/>
            <person name="Petit J.-L."/>
            <person name="Fonknechten N."/>
            <person name="Da Silva C."/>
            <person name="Cattolico L."/>
            <person name="Levy M."/>
            <person name="Barbe V."/>
            <person name="De Berardinis V."/>
            <person name="Ureta-Vidal A."/>
            <person name="Pelletier E."/>
            <person name="Vico V."/>
            <person name="Anthouard V."/>
            <person name="Rowen L."/>
            <person name="Madan A."/>
            <person name="Qin S."/>
            <person name="Sun H."/>
            <person name="Du H."/>
            <person name="Pepin K."/>
            <person name="Artiguenave F."/>
            <person name="Robert C."/>
            <person name="Cruaud C."/>
            <person name="Bruels T."/>
            <person name="Jaillon O."/>
            <person name="Friedlander L."/>
            <person name="Samson G."/>
            <person name="Brottier P."/>
            <person name="Cure S."/>
            <person name="Segurens B."/>
            <person name="Aniere F."/>
            <person name="Samain S."/>
            <person name="Crespeau H."/>
            <person name="Abbasi N."/>
            <person name="Aiach N."/>
            <person name="Boscus D."/>
            <person name="Dickhoff R."/>
            <person name="Dors M."/>
            <person name="Dubois I."/>
            <person name="Friedman C."/>
            <person name="Gouyvenoux M."/>
            <person name="James R."/>
            <person name="Madan A."/>
            <person name="Mairey-Estrada B."/>
            <person name="Mangenot S."/>
            <person name="Martins N."/>
            <person name="Menard M."/>
            <person name="Oztas S."/>
            <person name="Ratcliffe A."/>
            <person name="Shaffer T."/>
            <person name="Trask B."/>
            <person name="Vacherie B."/>
            <person name="Bellemere C."/>
            <person name="Belser C."/>
            <person name="Besnard-Gonnet M."/>
            <person name="Bartol-Mavel D."/>
            <person name="Boutard M."/>
            <person name="Briez-Silla S."/>
            <person name="Combette S."/>
            <person name="Dufosse-Laurent V."/>
            <person name="Ferron C."/>
            <person name="Lechaplais C."/>
            <person name="Louesse C."/>
            <person name="Muselet D."/>
            <person name="Magdelenat G."/>
            <person name="Pateau E."/>
            <person name="Petit E."/>
            <person name="Sirvain-Trukniewicz P."/>
            <person name="Trybou A."/>
            <person name="Vega-Czarny N."/>
            <person name="Bataille E."/>
            <person name="Bluet E."/>
            <person name="Bordelais I."/>
            <person name="Dubois M."/>
            <person name="Dumont C."/>
            <person name="Guerin T."/>
            <person name="Haffray S."/>
            <person name="Hammadi R."/>
            <person name="Muanga J."/>
            <person name="Pellouin V."/>
            <person name="Robert D."/>
            <person name="Wunderle E."/>
            <person name="Gauguet G."/>
            <person name="Roy A."/>
            <person name="Sainte-Marthe L."/>
            <person name="Verdier J."/>
            <person name="Verdier-Discala C."/>
            <person name="Hillier L.W."/>
            <person name="Fulton L."/>
            <person name="McPherson J."/>
            <person name="Matsuda F."/>
            <person name="Wilson R."/>
            <person name="Scarpelli C."/>
            <person name="Gyapay G."/>
            <person name="Wincker P."/>
            <person name="Saurin W."/>
            <person name="Quetier F."/>
            <person name="Waterston R."/>
            <person name="Hood L."/>
            <person name="Weissenbach J."/>
        </authorList>
    </citation>
    <scope>NUCLEOTIDE SEQUENCE [LARGE SCALE GENOMIC DNA]</scope>
</reference>
<reference key="3">
    <citation type="journal article" date="2004" name="Genome Res.">
        <title>The status, quality, and expansion of the NIH full-length cDNA project: the Mammalian Gene Collection (MGC).</title>
        <authorList>
            <consortium name="The MGC Project Team"/>
        </authorList>
    </citation>
    <scope>NUCLEOTIDE SEQUENCE [LARGE SCALE MRNA] (ISOFORM 2)</scope>
</reference>
<name>ACOT6_HUMAN</name>
<dbReference type="EC" id="3.1.2.-" evidence="2"/>
<dbReference type="EMBL" id="DQ082756">
    <property type="protein sequence ID" value="AAZ31238.1"/>
    <property type="molecule type" value="mRNA"/>
</dbReference>
<dbReference type="EMBL" id="AC005225">
    <property type="status" value="NOT_ANNOTATED_CDS"/>
    <property type="molecule type" value="Genomic_DNA"/>
</dbReference>
<dbReference type="EMBL" id="BC126378">
    <property type="protein sequence ID" value="AAI26379.1"/>
    <property type="molecule type" value="mRNA"/>
</dbReference>
<dbReference type="EMBL" id="BC126380">
    <property type="protein sequence ID" value="AAI26381.1"/>
    <property type="molecule type" value="mRNA"/>
</dbReference>
<dbReference type="CCDS" id="CCDS32118.1">
    <molecule id="Q3I5F7-2"/>
</dbReference>
<dbReference type="CCDS" id="CCDS91900.1">
    <molecule id="Q3I5F7-1"/>
</dbReference>
<dbReference type="RefSeq" id="NP_001032239.1">
    <molecule id="Q3I5F7-2"/>
    <property type="nucleotide sequence ID" value="NM_001037162.1"/>
</dbReference>
<dbReference type="RefSeq" id="NP_001352717.1">
    <molecule id="Q3I5F7-1"/>
    <property type="nucleotide sequence ID" value="NM_001365788.1"/>
</dbReference>
<dbReference type="RefSeq" id="NP_001352718.1">
    <molecule id="Q3I5F7-2"/>
    <property type="nucleotide sequence ID" value="NM_001365789.1"/>
</dbReference>
<dbReference type="SMR" id="Q3I5F7"/>
<dbReference type="BioGRID" id="534966">
    <property type="interactions" value="7"/>
</dbReference>
<dbReference type="FunCoup" id="Q3I5F7">
    <property type="interactions" value="34"/>
</dbReference>
<dbReference type="IntAct" id="Q3I5F7">
    <property type="interactions" value="6"/>
</dbReference>
<dbReference type="STRING" id="9606.ENSP00000370531"/>
<dbReference type="ESTHER" id="human-ACOT6">
    <property type="family name" value="Acyl-CoA_Thioesterase"/>
</dbReference>
<dbReference type="MEROPS" id="S09.944"/>
<dbReference type="iPTMnet" id="Q3I5F7"/>
<dbReference type="PhosphoSitePlus" id="Q3I5F7"/>
<dbReference type="BioMuta" id="ACOT6"/>
<dbReference type="DMDM" id="121942509"/>
<dbReference type="jPOST" id="Q3I5F7"/>
<dbReference type="MassIVE" id="Q3I5F7"/>
<dbReference type="PaxDb" id="9606-ENSP00000370531"/>
<dbReference type="PeptideAtlas" id="Q3I5F7"/>
<dbReference type="Antibodypedia" id="63322">
    <property type="antibodies" value="45 antibodies from 17 providers"/>
</dbReference>
<dbReference type="DNASU" id="641372"/>
<dbReference type="Ensembl" id="ENST00000381139.1">
    <molecule id="Q3I5F7-2"/>
    <property type="protein sequence ID" value="ENSP00000370531.1"/>
    <property type="gene ID" value="ENSG00000205669.4"/>
</dbReference>
<dbReference type="Ensembl" id="ENST00000645972.2">
    <molecule id="Q3I5F7-1"/>
    <property type="protein sequence ID" value="ENSP00000496277.1"/>
    <property type="gene ID" value="ENSG00000205669.4"/>
</dbReference>
<dbReference type="GeneID" id="641372"/>
<dbReference type="KEGG" id="hsa:641372"/>
<dbReference type="MANE-Select" id="ENST00000645972.2">
    <property type="protein sequence ID" value="ENSP00000496277.1"/>
    <property type="RefSeq nucleotide sequence ID" value="NM_001365788.1"/>
    <property type="RefSeq protein sequence ID" value="NP_001352717.1"/>
</dbReference>
<dbReference type="UCSC" id="uc001xop.3">
    <molecule id="Q3I5F7-1"/>
    <property type="organism name" value="human"/>
</dbReference>
<dbReference type="AGR" id="HGNC:33159"/>
<dbReference type="CTD" id="641372"/>
<dbReference type="DisGeNET" id="641372"/>
<dbReference type="GeneCards" id="ACOT6"/>
<dbReference type="HGNC" id="HGNC:33159">
    <property type="gene designation" value="ACOT6"/>
</dbReference>
<dbReference type="HPA" id="ENSG00000205669">
    <property type="expression patterns" value="Tissue enhanced (kidney, liver, skeletal muscle)"/>
</dbReference>
<dbReference type="MIM" id="614267">
    <property type="type" value="gene"/>
</dbReference>
<dbReference type="neXtProt" id="NX_Q3I5F7"/>
<dbReference type="OpenTargets" id="ENSG00000205669"/>
<dbReference type="PharmGKB" id="PA162375329"/>
<dbReference type="VEuPathDB" id="HostDB:ENSG00000205669"/>
<dbReference type="eggNOG" id="ENOG502QQ8Z">
    <property type="taxonomic scope" value="Eukaryota"/>
</dbReference>
<dbReference type="GeneTree" id="ENSGT01010000222336"/>
<dbReference type="HOGENOM" id="CLU_029849_4_1_1"/>
<dbReference type="InParanoid" id="Q3I5F7"/>
<dbReference type="OMA" id="GICEIPL"/>
<dbReference type="OrthoDB" id="6347013at2759"/>
<dbReference type="PAN-GO" id="Q3I5F7">
    <property type="GO annotations" value="3 GO annotations based on evolutionary models"/>
</dbReference>
<dbReference type="PhylomeDB" id="Q3I5F7"/>
<dbReference type="TreeFam" id="TF314911"/>
<dbReference type="BRENDA" id="3.1.2.20">
    <property type="organism ID" value="2681"/>
</dbReference>
<dbReference type="PathwayCommons" id="Q3I5F7"/>
<dbReference type="SignaLink" id="Q3I5F7"/>
<dbReference type="UniPathway" id="UPA00199"/>
<dbReference type="BioGRID-ORCS" id="641372">
    <property type="hits" value="13 hits in 1146 CRISPR screens"/>
</dbReference>
<dbReference type="ChiTaRS" id="ACOT6">
    <property type="organism name" value="human"/>
</dbReference>
<dbReference type="GenomeRNAi" id="641372"/>
<dbReference type="Pharos" id="Q3I5F7">
    <property type="development level" value="Tdark"/>
</dbReference>
<dbReference type="PRO" id="PR:Q3I5F7"/>
<dbReference type="Proteomes" id="UP000005640">
    <property type="component" value="Chromosome 14"/>
</dbReference>
<dbReference type="RNAct" id="Q3I5F7">
    <property type="molecule type" value="protein"/>
</dbReference>
<dbReference type="Bgee" id="ENSG00000205669">
    <property type="expression patterns" value="Expressed in male germ line stem cell (sensu Vertebrata) in testis and 75 other cell types or tissues"/>
</dbReference>
<dbReference type="ExpressionAtlas" id="Q3I5F7">
    <property type="expression patterns" value="baseline and differential"/>
</dbReference>
<dbReference type="GO" id="GO:0005829">
    <property type="term" value="C:cytosol"/>
    <property type="evidence" value="ECO:0000314"/>
    <property type="project" value="HGNC-UCL"/>
</dbReference>
<dbReference type="GO" id="GO:0005777">
    <property type="term" value="C:peroxisome"/>
    <property type="evidence" value="ECO:0007669"/>
    <property type="project" value="UniProtKB-SubCell"/>
</dbReference>
<dbReference type="GO" id="GO:0052689">
    <property type="term" value="F:carboxylic ester hydrolase activity"/>
    <property type="evidence" value="ECO:0007669"/>
    <property type="project" value="UniProtKB-KW"/>
</dbReference>
<dbReference type="GO" id="GO:0047617">
    <property type="term" value="F:fatty acyl-CoA hydrolase activity"/>
    <property type="evidence" value="ECO:0000318"/>
    <property type="project" value="GO_Central"/>
</dbReference>
<dbReference type="GO" id="GO:0006637">
    <property type="term" value="P:acyl-CoA metabolic process"/>
    <property type="evidence" value="ECO:0000318"/>
    <property type="project" value="GO_Central"/>
</dbReference>
<dbReference type="GO" id="GO:0006631">
    <property type="term" value="P:fatty acid metabolic process"/>
    <property type="evidence" value="ECO:0000318"/>
    <property type="project" value="GO_Central"/>
</dbReference>
<dbReference type="FunFam" id="3.40.50.1820:FF:000269">
    <property type="entry name" value="Acyl-CoA thioesterase 6"/>
    <property type="match status" value="1"/>
</dbReference>
<dbReference type="FunFam" id="2.60.40.2240:FF:000001">
    <property type="entry name" value="acyl-coenzyme A thioesterase 4"/>
    <property type="match status" value="1"/>
</dbReference>
<dbReference type="Gene3D" id="2.60.40.2240">
    <property type="entry name" value="Acyl-CoA thioester hydrolase/BAAT N-terminal domain"/>
    <property type="match status" value="1"/>
</dbReference>
<dbReference type="Gene3D" id="3.40.50.1820">
    <property type="entry name" value="alpha/beta hydrolase"/>
    <property type="match status" value="1"/>
</dbReference>
<dbReference type="InterPro" id="IPR029058">
    <property type="entry name" value="AB_hydrolase_fold"/>
</dbReference>
<dbReference type="InterPro" id="IPR016662">
    <property type="entry name" value="Acyl-CoA_thioEstase_long-chain"/>
</dbReference>
<dbReference type="InterPro" id="IPR014940">
    <property type="entry name" value="BAAT_C"/>
</dbReference>
<dbReference type="InterPro" id="IPR006862">
    <property type="entry name" value="Thio_Ohase/aa_AcTrfase"/>
</dbReference>
<dbReference type="InterPro" id="IPR042490">
    <property type="entry name" value="Thio_Ohase/BAAT_N"/>
</dbReference>
<dbReference type="PANTHER" id="PTHR10824:SF17">
    <property type="entry name" value="ACYL-COENZYME A THIOESTERASE 6"/>
    <property type="match status" value="1"/>
</dbReference>
<dbReference type="PANTHER" id="PTHR10824">
    <property type="entry name" value="ACYL-COENZYME A THIOESTERASE-RELATED"/>
    <property type="match status" value="1"/>
</dbReference>
<dbReference type="Pfam" id="PF08840">
    <property type="entry name" value="BAAT_C"/>
    <property type="match status" value="1"/>
</dbReference>
<dbReference type="Pfam" id="PF04775">
    <property type="entry name" value="Bile_Hydr_Trans"/>
    <property type="match status" value="1"/>
</dbReference>
<dbReference type="PIRSF" id="PIRSF016521">
    <property type="entry name" value="Acyl-CoA_hydro"/>
    <property type="match status" value="1"/>
</dbReference>
<dbReference type="SUPFAM" id="SSF53474">
    <property type="entry name" value="alpha/beta-Hydrolases"/>
    <property type="match status" value="1"/>
</dbReference>
<feature type="chain" id="PRO_0000305098" description="Acyl-coenzyme A thioesterase 6">
    <location>
        <begin position="1"/>
        <end position="421"/>
    </location>
</feature>
<feature type="short sequence motif" description="Peroxisome targeting signal" evidence="3">
    <location>
        <begin position="419"/>
        <end position="421"/>
    </location>
</feature>
<feature type="active site" description="Charge relay system" evidence="1">
    <location>
        <position position="232"/>
    </location>
</feature>
<feature type="active site" description="Charge relay system" evidence="1">
    <location>
        <position position="326"/>
    </location>
</feature>
<feature type="active site" description="Charge relay system" evidence="1">
    <location>
        <position position="360"/>
    </location>
</feature>
<feature type="splice variant" id="VSP_061185" description="In isoform 2.">
    <location>
        <begin position="1"/>
        <end position="214"/>
    </location>
</feature>
<feature type="sequence variant" id="VAR_052302" description="In dbSNP:rs17782052.">
    <original>E</original>
    <variation>K</variation>
    <location>
        <position position="380"/>
    </location>
</feature>